<dbReference type="EC" id="2.7.7.27" evidence="1"/>
<dbReference type="EMBL" id="CP000469">
    <property type="protein sequence ID" value="ABK49157.1"/>
    <property type="molecule type" value="Genomic_DNA"/>
</dbReference>
<dbReference type="RefSeq" id="WP_011717793.1">
    <property type="nucleotide sequence ID" value="NC_008577.1"/>
</dbReference>
<dbReference type="SMR" id="A0KZD8"/>
<dbReference type="STRING" id="94122.Shewana3_2931"/>
<dbReference type="GeneID" id="94728865"/>
<dbReference type="KEGG" id="shn:Shewana3_2931"/>
<dbReference type="eggNOG" id="COG0448">
    <property type="taxonomic scope" value="Bacteria"/>
</dbReference>
<dbReference type="HOGENOM" id="CLU_029499_14_1_6"/>
<dbReference type="OrthoDB" id="9801810at2"/>
<dbReference type="UniPathway" id="UPA00164"/>
<dbReference type="Proteomes" id="UP000002589">
    <property type="component" value="Chromosome"/>
</dbReference>
<dbReference type="GO" id="GO:0005524">
    <property type="term" value="F:ATP binding"/>
    <property type="evidence" value="ECO:0007669"/>
    <property type="project" value="UniProtKB-KW"/>
</dbReference>
<dbReference type="GO" id="GO:0008878">
    <property type="term" value="F:glucose-1-phosphate adenylyltransferase activity"/>
    <property type="evidence" value="ECO:0007669"/>
    <property type="project" value="UniProtKB-UniRule"/>
</dbReference>
<dbReference type="GO" id="GO:0005978">
    <property type="term" value="P:glycogen biosynthetic process"/>
    <property type="evidence" value="ECO:0007669"/>
    <property type="project" value="UniProtKB-UniRule"/>
</dbReference>
<dbReference type="CDD" id="cd02508">
    <property type="entry name" value="ADP_Glucose_PP"/>
    <property type="match status" value="1"/>
</dbReference>
<dbReference type="CDD" id="cd04651">
    <property type="entry name" value="LbH_G1P_AT_C"/>
    <property type="match status" value="1"/>
</dbReference>
<dbReference type="Gene3D" id="2.160.10.10">
    <property type="entry name" value="Hexapeptide repeat proteins"/>
    <property type="match status" value="1"/>
</dbReference>
<dbReference type="Gene3D" id="3.90.550.10">
    <property type="entry name" value="Spore Coat Polysaccharide Biosynthesis Protein SpsA, Chain A"/>
    <property type="match status" value="1"/>
</dbReference>
<dbReference type="HAMAP" id="MF_00624">
    <property type="entry name" value="GlgC"/>
    <property type="match status" value="1"/>
</dbReference>
<dbReference type="InterPro" id="IPR011831">
    <property type="entry name" value="ADP-Glc_PPase"/>
</dbReference>
<dbReference type="InterPro" id="IPR005836">
    <property type="entry name" value="ADP_Glu_pyroP_CS"/>
</dbReference>
<dbReference type="InterPro" id="IPR023049">
    <property type="entry name" value="GlgC_bac"/>
</dbReference>
<dbReference type="InterPro" id="IPR056818">
    <property type="entry name" value="GlmU/GlgC-like_hexapep"/>
</dbReference>
<dbReference type="InterPro" id="IPR005835">
    <property type="entry name" value="NTP_transferase_dom"/>
</dbReference>
<dbReference type="InterPro" id="IPR029044">
    <property type="entry name" value="Nucleotide-diphossugar_trans"/>
</dbReference>
<dbReference type="InterPro" id="IPR011004">
    <property type="entry name" value="Trimer_LpxA-like_sf"/>
</dbReference>
<dbReference type="NCBIfam" id="TIGR02091">
    <property type="entry name" value="glgC"/>
    <property type="match status" value="1"/>
</dbReference>
<dbReference type="NCBIfam" id="NF001947">
    <property type="entry name" value="PRK00725.1"/>
    <property type="match status" value="1"/>
</dbReference>
<dbReference type="NCBIfam" id="NF002023">
    <property type="entry name" value="PRK00844.1"/>
    <property type="match status" value="1"/>
</dbReference>
<dbReference type="PANTHER" id="PTHR43523:SF2">
    <property type="entry name" value="GLUCOSE-1-PHOSPHATE ADENYLYLTRANSFERASE"/>
    <property type="match status" value="1"/>
</dbReference>
<dbReference type="PANTHER" id="PTHR43523">
    <property type="entry name" value="GLUCOSE-1-PHOSPHATE ADENYLYLTRANSFERASE-RELATED"/>
    <property type="match status" value="1"/>
</dbReference>
<dbReference type="Pfam" id="PF24894">
    <property type="entry name" value="Hexapep_GlmU"/>
    <property type="match status" value="1"/>
</dbReference>
<dbReference type="Pfam" id="PF00483">
    <property type="entry name" value="NTP_transferase"/>
    <property type="match status" value="1"/>
</dbReference>
<dbReference type="SUPFAM" id="SSF53448">
    <property type="entry name" value="Nucleotide-diphospho-sugar transferases"/>
    <property type="match status" value="1"/>
</dbReference>
<dbReference type="SUPFAM" id="SSF51161">
    <property type="entry name" value="Trimeric LpxA-like enzymes"/>
    <property type="match status" value="1"/>
</dbReference>
<dbReference type="PROSITE" id="PS00808">
    <property type="entry name" value="ADP_GLC_PYROPHOSPH_1"/>
    <property type="match status" value="1"/>
</dbReference>
<dbReference type="PROSITE" id="PS00809">
    <property type="entry name" value="ADP_GLC_PYROPHOSPH_2"/>
    <property type="match status" value="1"/>
</dbReference>
<dbReference type="PROSITE" id="PS00810">
    <property type="entry name" value="ADP_GLC_PYROPHOSPH_3"/>
    <property type="match status" value="1"/>
</dbReference>
<feature type="chain" id="PRO_1000051585" description="Glucose-1-phosphate adenylyltransferase">
    <location>
        <begin position="1"/>
        <end position="420"/>
    </location>
</feature>
<feature type="binding site" evidence="1">
    <location>
        <position position="107"/>
    </location>
    <ligand>
        <name>alpha-D-glucose 1-phosphate</name>
        <dbReference type="ChEBI" id="CHEBI:58601"/>
    </ligand>
</feature>
<feature type="binding site" evidence="1">
    <location>
        <position position="173"/>
    </location>
    <ligand>
        <name>alpha-D-glucose 1-phosphate</name>
        <dbReference type="ChEBI" id="CHEBI:58601"/>
    </ligand>
</feature>
<feature type="binding site" evidence="1">
    <location>
        <begin position="188"/>
        <end position="189"/>
    </location>
    <ligand>
        <name>alpha-D-glucose 1-phosphate</name>
        <dbReference type="ChEBI" id="CHEBI:58601"/>
    </ligand>
</feature>
<feature type="binding site" evidence="1">
    <location>
        <position position="206"/>
    </location>
    <ligand>
        <name>alpha-D-glucose 1-phosphate</name>
        <dbReference type="ChEBI" id="CHEBI:58601"/>
    </ligand>
</feature>
<name>GLGC_SHESA</name>
<organism>
    <name type="scientific">Shewanella sp. (strain ANA-3)</name>
    <dbReference type="NCBI Taxonomy" id="94122"/>
    <lineage>
        <taxon>Bacteria</taxon>
        <taxon>Pseudomonadati</taxon>
        <taxon>Pseudomonadota</taxon>
        <taxon>Gammaproteobacteria</taxon>
        <taxon>Alteromonadales</taxon>
        <taxon>Shewanellaceae</taxon>
        <taxon>Shewanella</taxon>
    </lineage>
</organism>
<accession>A0KZD8</accession>
<comment type="function">
    <text evidence="1">Involved in the biosynthesis of ADP-glucose, a building block required for the elongation reactions to produce glycogen. Catalyzes the reaction between ATP and alpha-D-glucose 1-phosphate (G1P) to produce pyrophosphate and ADP-Glc.</text>
</comment>
<comment type="catalytic activity">
    <reaction evidence="1">
        <text>alpha-D-glucose 1-phosphate + ATP + H(+) = ADP-alpha-D-glucose + diphosphate</text>
        <dbReference type="Rhea" id="RHEA:12120"/>
        <dbReference type="ChEBI" id="CHEBI:15378"/>
        <dbReference type="ChEBI" id="CHEBI:30616"/>
        <dbReference type="ChEBI" id="CHEBI:33019"/>
        <dbReference type="ChEBI" id="CHEBI:57498"/>
        <dbReference type="ChEBI" id="CHEBI:58601"/>
        <dbReference type="EC" id="2.7.7.27"/>
    </reaction>
</comment>
<comment type="pathway">
    <text evidence="1">Glycan biosynthesis; glycogen biosynthesis.</text>
</comment>
<comment type="subunit">
    <text evidence="1">Homotetramer.</text>
</comment>
<comment type="similarity">
    <text evidence="1">Belongs to the bacterial/plant glucose-1-phosphate adenylyltransferase family.</text>
</comment>
<gene>
    <name evidence="1" type="primary">glgC</name>
    <name type="ordered locus">Shewana3_2931</name>
</gene>
<protein>
    <recommendedName>
        <fullName evidence="1">Glucose-1-phosphate adenylyltransferase</fullName>
        <ecNumber evidence="1">2.7.7.27</ecNumber>
    </recommendedName>
    <alternativeName>
        <fullName evidence="1">ADP-glucose pyrophosphorylase</fullName>
        <shortName evidence="1">ADPGlc PPase</shortName>
    </alternativeName>
    <alternativeName>
        <fullName evidence="1">ADP-glucose synthase</fullName>
    </alternativeName>
</protein>
<reference key="1">
    <citation type="submission" date="2006-09" db="EMBL/GenBank/DDBJ databases">
        <title>Complete sequence of chromosome 1 of Shewanella sp. ANA-3.</title>
        <authorList>
            <person name="Copeland A."/>
            <person name="Lucas S."/>
            <person name="Lapidus A."/>
            <person name="Barry K."/>
            <person name="Detter J.C."/>
            <person name="Glavina del Rio T."/>
            <person name="Hammon N."/>
            <person name="Israni S."/>
            <person name="Dalin E."/>
            <person name="Tice H."/>
            <person name="Pitluck S."/>
            <person name="Chertkov O."/>
            <person name="Brettin T."/>
            <person name="Bruce D."/>
            <person name="Han C."/>
            <person name="Tapia R."/>
            <person name="Gilna P."/>
            <person name="Schmutz J."/>
            <person name="Larimer F."/>
            <person name="Land M."/>
            <person name="Hauser L."/>
            <person name="Kyrpides N."/>
            <person name="Kim E."/>
            <person name="Newman D."/>
            <person name="Salticov C."/>
            <person name="Konstantinidis K."/>
            <person name="Klappenback J."/>
            <person name="Tiedje J."/>
            <person name="Richardson P."/>
        </authorList>
    </citation>
    <scope>NUCLEOTIDE SEQUENCE [LARGE SCALE GENOMIC DNA]</scope>
    <source>
        <strain>ANA-3</strain>
    </source>
</reference>
<keyword id="KW-0067">ATP-binding</keyword>
<keyword id="KW-0119">Carbohydrate metabolism</keyword>
<keyword id="KW-0320">Glycogen biosynthesis</keyword>
<keyword id="KW-0321">Glycogen metabolism</keyword>
<keyword id="KW-0547">Nucleotide-binding</keyword>
<keyword id="KW-0548">Nucleotidyltransferase</keyword>
<keyword id="KW-0808">Transferase</keyword>
<proteinExistence type="inferred from homology"/>
<sequence length="420" mass="47306">MSNVRYISNLTRETYALILAGGRGSRLHELTDWRAKPALYFGGKFRIIDFPLSNCINSGIRRVGVVTQYKSHSLIRHVMRGWGHFKKELGESVEILPASQRYSENWYQGTADAVFQNIDIIRHELPKYVMVLSGDHVYRMDYAGLLAAHAESGADMTVSCLEVPVAEAAGAFGVMEVDDEMRILGFEEKPKHPKHSPGNPEKCLASMGNYVFNTEFLFEQLKKDAQNANSDRDFGKDIIPSIIEKHKVFAYPFKSAFPNEQAYWRDVGTLDSFWQANMELLSPTPALNLYDAKWPIWTYQEQLPPAKFVFDDDDRRGMAVDSIISGGCIISGATVRRSVLFNEVRVCSYSVVEDSVVLPDVVVLRHCKIKNAIIDRGCIIPEGTVIGYNHDHDRAKGFRVSEKGITLVTRDMLGLPVGYE</sequence>
<evidence type="ECO:0000255" key="1">
    <source>
        <dbReference type="HAMAP-Rule" id="MF_00624"/>
    </source>
</evidence>